<proteinExistence type="inferred from homology"/>
<feature type="chain" id="PRO_0000384929" description="Elongation factor P-like protein">
    <location>
        <begin position="1"/>
        <end position="188"/>
    </location>
</feature>
<name>EFPL_ALIF1</name>
<comment type="similarity">
    <text evidence="1">Belongs to the elongation factor P family.</text>
</comment>
<reference key="1">
    <citation type="journal article" date="2005" name="Proc. Natl. Acad. Sci. U.S.A.">
        <title>Complete genome sequence of Vibrio fischeri: a symbiotic bacterium with pathogenic congeners.</title>
        <authorList>
            <person name="Ruby E.G."/>
            <person name="Urbanowski M."/>
            <person name="Campbell J."/>
            <person name="Dunn A."/>
            <person name="Faini M."/>
            <person name="Gunsalus R."/>
            <person name="Lostroh P."/>
            <person name="Lupp C."/>
            <person name="McCann J."/>
            <person name="Millikan D."/>
            <person name="Schaefer A."/>
            <person name="Stabb E."/>
            <person name="Stevens A."/>
            <person name="Visick K."/>
            <person name="Whistler C."/>
            <person name="Greenberg E.P."/>
        </authorList>
    </citation>
    <scope>NUCLEOTIDE SEQUENCE [LARGE SCALE GENOMIC DNA]</scope>
    <source>
        <strain>ATCC 700601 / ES114</strain>
    </source>
</reference>
<sequence>MPKASDIKKGSAIEHNGKVFFVKEISKLTPSGRAGATLFRMRMYDVATGAKSDESFKADDMINLADFSRRSATFSYVDGNEYVFMDSEDYTPYNFNKEAIEEELLFITEETQGLQILIVDGAPVAIELPSAVDLEIVETAPSIKGASASARTKPATMTTGLTVQVPEYIANGEKVKINTTEHKFMSRA</sequence>
<organism>
    <name type="scientific">Aliivibrio fischeri (strain ATCC 700601 / ES114)</name>
    <name type="common">Vibrio fischeri</name>
    <dbReference type="NCBI Taxonomy" id="312309"/>
    <lineage>
        <taxon>Bacteria</taxon>
        <taxon>Pseudomonadati</taxon>
        <taxon>Pseudomonadota</taxon>
        <taxon>Gammaproteobacteria</taxon>
        <taxon>Vibrionales</taxon>
        <taxon>Vibrionaceae</taxon>
        <taxon>Aliivibrio</taxon>
    </lineage>
</organism>
<accession>Q5E5C9</accession>
<dbReference type="EMBL" id="CP000020">
    <property type="protein sequence ID" value="AAW85767.1"/>
    <property type="molecule type" value="Genomic_DNA"/>
</dbReference>
<dbReference type="RefSeq" id="WP_011261881.1">
    <property type="nucleotide sequence ID" value="NC_006840.2"/>
</dbReference>
<dbReference type="RefSeq" id="YP_204655.1">
    <property type="nucleotide sequence ID" value="NC_006840.2"/>
</dbReference>
<dbReference type="SMR" id="Q5E5C9"/>
<dbReference type="STRING" id="312309.VF_1272"/>
<dbReference type="EnsemblBacteria" id="AAW85767">
    <property type="protein sequence ID" value="AAW85767"/>
    <property type="gene ID" value="VF_1272"/>
</dbReference>
<dbReference type="GeneID" id="54163944"/>
<dbReference type="KEGG" id="vfi:VF_1272"/>
<dbReference type="PATRIC" id="fig|312309.11.peg.1281"/>
<dbReference type="eggNOG" id="COG0231">
    <property type="taxonomic scope" value="Bacteria"/>
</dbReference>
<dbReference type="HOGENOM" id="CLU_074944_2_0_6"/>
<dbReference type="OrthoDB" id="5599402at2"/>
<dbReference type="Proteomes" id="UP000000537">
    <property type="component" value="Chromosome I"/>
</dbReference>
<dbReference type="GO" id="GO:0005737">
    <property type="term" value="C:cytoplasm"/>
    <property type="evidence" value="ECO:0007669"/>
    <property type="project" value="InterPro"/>
</dbReference>
<dbReference type="GO" id="GO:0003746">
    <property type="term" value="F:translation elongation factor activity"/>
    <property type="evidence" value="ECO:0007669"/>
    <property type="project" value="UniProtKB-UniRule"/>
</dbReference>
<dbReference type="GO" id="GO:0043043">
    <property type="term" value="P:peptide biosynthetic process"/>
    <property type="evidence" value="ECO:0007669"/>
    <property type="project" value="InterPro"/>
</dbReference>
<dbReference type="CDD" id="cd05794">
    <property type="entry name" value="S1_EF-P_repeat_2"/>
    <property type="match status" value="1"/>
</dbReference>
<dbReference type="FunFam" id="2.40.50.140:FF:000004">
    <property type="entry name" value="Elongation factor P"/>
    <property type="match status" value="1"/>
</dbReference>
<dbReference type="Gene3D" id="2.30.30.30">
    <property type="match status" value="1"/>
</dbReference>
<dbReference type="Gene3D" id="2.40.50.140">
    <property type="entry name" value="Nucleic acid-binding proteins"/>
    <property type="match status" value="2"/>
</dbReference>
<dbReference type="HAMAP" id="MF_00646">
    <property type="entry name" value="EFP"/>
    <property type="match status" value="1"/>
</dbReference>
<dbReference type="InterPro" id="IPR015365">
    <property type="entry name" value="Elong-fact-P_C"/>
</dbReference>
<dbReference type="InterPro" id="IPR012340">
    <property type="entry name" value="NA-bd_OB-fold"/>
</dbReference>
<dbReference type="InterPro" id="IPR014722">
    <property type="entry name" value="Rib_uL2_dom2"/>
</dbReference>
<dbReference type="InterPro" id="IPR020599">
    <property type="entry name" value="Transl_elong_fac_P/YeiP"/>
</dbReference>
<dbReference type="InterPro" id="IPR013185">
    <property type="entry name" value="Transl_elong_KOW-like"/>
</dbReference>
<dbReference type="InterPro" id="IPR011897">
    <property type="entry name" value="Transl_elong_p-like_YeiP"/>
</dbReference>
<dbReference type="InterPro" id="IPR001059">
    <property type="entry name" value="Transl_elong_P/YeiP_cen"/>
</dbReference>
<dbReference type="InterPro" id="IPR013852">
    <property type="entry name" value="Transl_elong_P/YeiP_CS"/>
</dbReference>
<dbReference type="InterPro" id="IPR008991">
    <property type="entry name" value="Translation_prot_SH3-like_sf"/>
</dbReference>
<dbReference type="NCBIfam" id="NF001810">
    <property type="entry name" value="PRK00529.1"/>
    <property type="match status" value="1"/>
</dbReference>
<dbReference type="NCBIfam" id="NF003392">
    <property type="entry name" value="PRK04542.1"/>
    <property type="match status" value="1"/>
</dbReference>
<dbReference type="NCBIfam" id="TIGR02178">
    <property type="entry name" value="yeiP"/>
    <property type="match status" value="1"/>
</dbReference>
<dbReference type="PANTHER" id="PTHR30053">
    <property type="entry name" value="ELONGATION FACTOR P"/>
    <property type="match status" value="1"/>
</dbReference>
<dbReference type="PANTHER" id="PTHR30053:SF14">
    <property type="entry name" value="TRANSLATION ELONGATION FACTOR KOW-LIKE DOMAIN-CONTAINING PROTEIN"/>
    <property type="match status" value="1"/>
</dbReference>
<dbReference type="Pfam" id="PF01132">
    <property type="entry name" value="EFP"/>
    <property type="match status" value="1"/>
</dbReference>
<dbReference type="Pfam" id="PF08207">
    <property type="entry name" value="EFP_N"/>
    <property type="match status" value="1"/>
</dbReference>
<dbReference type="Pfam" id="PF09285">
    <property type="entry name" value="Elong-fact-P_C"/>
    <property type="match status" value="1"/>
</dbReference>
<dbReference type="PIRSF" id="PIRSF005901">
    <property type="entry name" value="EF-P"/>
    <property type="match status" value="1"/>
</dbReference>
<dbReference type="SMART" id="SM01185">
    <property type="entry name" value="EFP"/>
    <property type="match status" value="1"/>
</dbReference>
<dbReference type="SMART" id="SM00841">
    <property type="entry name" value="Elong-fact-P_C"/>
    <property type="match status" value="1"/>
</dbReference>
<dbReference type="SUPFAM" id="SSF50249">
    <property type="entry name" value="Nucleic acid-binding proteins"/>
    <property type="match status" value="2"/>
</dbReference>
<dbReference type="SUPFAM" id="SSF50104">
    <property type="entry name" value="Translation proteins SH3-like domain"/>
    <property type="match status" value="1"/>
</dbReference>
<dbReference type="PROSITE" id="PS01275">
    <property type="entry name" value="EFP"/>
    <property type="match status" value="1"/>
</dbReference>
<gene>
    <name type="ordered locus">VF_1272</name>
</gene>
<protein>
    <recommendedName>
        <fullName evidence="1">Elongation factor P-like protein</fullName>
    </recommendedName>
</protein>
<evidence type="ECO:0000255" key="1">
    <source>
        <dbReference type="HAMAP-Rule" id="MF_00646"/>
    </source>
</evidence>
<keyword id="KW-1185">Reference proteome</keyword>